<organism>
    <name type="scientific">Xenopus laevis</name>
    <name type="common">African clawed frog</name>
    <dbReference type="NCBI Taxonomy" id="8355"/>
    <lineage>
        <taxon>Eukaryota</taxon>
        <taxon>Metazoa</taxon>
        <taxon>Chordata</taxon>
        <taxon>Craniata</taxon>
        <taxon>Vertebrata</taxon>
        <taxon>Euteleostomi</taxon>
        <taxon>Amphibia</taxon>
        <taxon>Batrachia</taxon>
        <taxon>Anura</taxon>
        <taxon>Pipoidea</taxon>
        <taxon>Pipidae</taxon>
        <taxon>Xenopodinae</taxon>
        <taxon>Xenopus</taxon>
        <taxon>Xenopus</taxon>
    </lineage>
</organism>
<evidence type="ECO:0000250" key="1">
    <source>
        <dbReference type="UniProtKB" id="P54577"/>
    </source>
</evidence>
<evidence type="ECO:0000255" key="2">
    <source>
        <dbReference type="PROSITE-ProRule" id="PRU00209"/>
    </source>
</evidence>
<evidence type="ECO:0000256" key="3">
    <source>
        <dbReference type="SAM" id="MobiDB-lite"/>
    </source>
</evidence>
<evidence type="ECO:0000305" key="4"/>
<proteinExistence type="evidence at transcript level"/>
<sequence length="528" mass="58874">MGDSLTLEGKAQLITRNLQELLGEDKMKEILKERPLRIYWGTATTGKPHVAYFVPMSKIADFLKAGCEVTILFADLHAYLDNMKAPWDLLELRTRYYEQVIQAMLQSIGVPLERLRFIRGTEFQLSKEYTLDVYRLSSVVTQHDAKKAGAEVVKQVEHPLLSGLLYPGLQALDEEYLKVDAQFGGVDQRKIFTFAEKYLPALGYAKRIHLMNPMVPGLTGAKMSSSEEESKIDLLDSPADVKKKLKKAFCEPGNVENNGVLSFVRHVLFPLKSEFVVLRDEKFGGNKTYTDFETLEKDFAEELVHPGDLKASVEKALNKLLHPIREKFNSPEMKKLSNDAYPDASKQKSVPKGSTKNSGTEEIDPSLLDLRVGKILSVSQHPDADSLYVESVDVGEANPRCVVSGLVQYVPSDQLLGRSVVLLCNLKPQKMRGIESQGMLLCASTEGEQKQVEPLDPPSGSAPGERIYIEGYENGEPEGELKPKKKVFEKLQVDFRISDDLCAQWKGKNFLTKLGSVTCKTLRGGSIG</sequence>
<keyword id="KW-0030">Aminoacyl-tRNA synthetase</keyword>
<keyword id="KW-0067">ATP-binding</keyword>
<keyword id="KW-0963">Cytoplasm</keyword>
<keyword id="KW-0436">Ligase</keyword>
<keyword id="KW-0547">Nucleotide-binding</keyword>
<keyword id="KW-0539">Nucleus</keyword>
<keyword id="KW-0648">Protein biosynthesis</keyword>
<keyword id="KW-1185">Reference proteome</keyword>
<keyword id="KW-0694">RNA-binding</keyword>
<keyword id="KW-0820">tRNA-binding</keyword>
<feature type="chain" id="PRO_0000239694" description="Tyrosine--tRNA ligase, cytoplasmic">
    <location>
        <begin position="1"/>
        <end position="528"/>
    </location>
</feature>
<feature type="domain" description="tRNA-binding" evidence="2">
    <location>
        <begin position="364"/>
        <end position="468"/>
    </location>
</feature>
<feature type="region of interest" description="Disordered" evidence="3">
    <location>
        <begin position="332"/>
        <end position="362"/>
    </location>
</feature>
<feature type="short sequence motif" description="'HIGH' region" evidence="1">
    <location>
        <begin position="44"/>
        <end position="52"/>
    </location>
</feature>
<feature type="short sequence motif" description="'KMSKS' region" evidence="1">
    <location>
        <begin position="222"/>
        <end position="226"/>
    </location>
</feature>
<feature type="short sequence motif" description="Nuclear localization signal" evidence="1">
    <location>
        <begin position="242"/>
        <end position="247"/>
    </location>
</feature>
<feature type="binding site" evidence="1">
    <location>
        <position position="39"/>
    </location>
    <ligand>
        <name>L-tyrosine</name>
        <dbReference type="ChEBI" id="CHEBI:58315"/>
    </ligand>
</feature>
<feature type="binding site" evidence="1">
    <location>
        <position position="166"/>
    </location>
    <ligand>
        <name>L-tyrosine</name>
        <dbReference type="ChEBI" id="CHEBI:58315"/>
    </ligand>
</feature>
<feature type="binding site" evidence="1">
    <location>
        <position position="170"/>
    </location>
    <ligand>
        <name>L-tyrosine</name>
        <dbReference type="ChEBI" id="CHEBI:58315"/>
    </ligand>
</feature>
<feature type="binding site" evidence="1">
    <location>
        <position position="173"/>
    </location>
    <ligand>
        <name>L-tyrosine</name>
        <dbReference type="ChEBI" id="CHEBI:58315"/>
    </ligand>
</feature>
<feature type="binding site" evidence="1">
    <location>
        <position position="188"/>
    </location>
    <ligand>
        <name>L-tyrosine</name>
        <dbReference type="ChEBI" id="CHEBI:58315"/>
    </ligand>
</feature>
<dbReference type="EC" id="6.1.1.1" evidence="1"/>
<dbReference type="EMBL" id="BC045236">
    <property type="protein sequence ID" value="AAH45236.1"/>
    <property type="molecule type" value="mRNA"/>
</dbReference>
<dbReference type="RefSeq" id="NP_001080746.1">
    <property type="nucleotide sequence ID" value="NM_001087277.1"/>
</dbReference>
<dbReference type="SMR" id="Q7ZX51"/>
<dbReference type="DNASU" id="380438"/>
<dbReference type="GeneID" id="380438"/>
<dbReference type="KEGG" id="xla:380438"/>
<dbReference type="AGR" id="Xenbase:XB-GENE-491612"/>
<dbReference type="CTD" id="380438"/>
<dbReference type="Xenbase" id="XB-GENE-491612">
    <property type="gene designation" value="yars1.S"/>
</dbReference>
<dbReference type="OrthoDB" id="197206at2759"/>
<dbReference type="Proteomes" id="UP000186698">
    <property type="component" value="Chromosome 2S"/>
</dbReference>
<dbReference type="Bgee" id="380438">
    <property type="expression patterns" value="Expressed in stomach and 19 other cell types or tissues"/>
</dbReference>
<dbReference type="GO" id="GO:0005737">
    <property type="term" value="C:cytoplasm"/>
    <property type="evidence" value="ECO:0007669"/>
    <property type="project" value="UniProtKB-SubCell"/>
</dbReference>
<dbReference type="GO" id="GO:0005634">
    <property type="term" value="C:nucleus"/>
    <property type="evidence" value="ECO:0007669"/>
    <property type="project" value="UniProtKB-SubCell"/>
</dbReference>
<dbReference type="GO" id="GO:0005524">
    <property type="term" value="F:ATP binding"/>
    <property type="evidence" value="ECO:0007669"/>
    <property type="project" value="UniProtKB-KW"/>
</dbReference>
<dbReference type="GO" id="GO:0000049">
    <property type="term" value="F:tRNA binding"/>
    <property type="evidence" value="ECO:0007669"/>
    <property type="project" value="UniProtKB-KW"/>
</dbReference>
<dbReference type="GO" id="GO:0004831">
    <property type="term" value="F:tyrosine-tRNA ligase activity"/>
    <property type="evidence" value="ECO:0000318"/>
    <property type="project" value="GO_Central"/>
</dbReference>
<dbReference type="GO" id="GO:0006437">
    <property type="term" value="P:tyrosyl-tRNA aminoacylation"/>
    <property type="evidence" value="ECO:0007669"/>
    <property type="project" value="InterPro"/>
</dbReference>
<dbReference type="CDD" id="cd02799">
    <property type="entry name" value="tRNA_bind_EMAP-II_like"/>
    <property type="match status" value="1"/>
</dbReference>
<dbReference type="CDD" id="cd00805">
    <property type="entry name" value="TyrRS_core"/>
    <property type="match status" value="1"/>
</dbReference>
<dbReference type="FunFam" id="1.10.240.10:FF:000004">
    <property type="entry name" value="Tyrosine--tRNA ligase"/>
    <property type="match status" value="1"/>
</dbReference>
<dbReference type="FunFam" id="3.40.50.620:FF:000040">
    <property type="entry name" value="Tyrosine--tRNA ligase"/>
    <property type="match status" value="1"/>
</dbReference>
<dbReference type="FunFam" id="2.40.50.140:FF:000047">
    <property type="entry name" value="tyrosine--tRNA ligase, cytoplasmic isoform X2"/>
    <property type="match status" value="1"/>
</dbReference>
<dbReference type="Gene3D" id="3.40.50.620">
    <property type="entry name" value="HUPs"/>
    <property type="match status" value="1"/>
</dbReference>
<dbReference type="Gene3D" id="2.40.50.140">
    <property type="entry name" value="Nucleic acid-binding proteins"/>
    <property type="match status" value="1"/>
</dbReference>
<dbReference type="Gene3D" id="1.10.240.10">
    <property type="entry name" value="Tyrosyl-Transfer RNA Synthetase"/>
    <property type="match status" value="1"/>
</dbReference>
<dbReference type="InterPro" id="IPR002305">
    <property type="entry name" value="aa-tRNA-synth_Ic"/>
</dbReference>
<dbReference type="InterPro" id="IPR012340">
    <property type="entry name" value="NA-bd_OB-fold"/>
</dbReference>
<dbReference type="InterPro" id="IPR014729">
    <property type="entry name" value="Rossmann-like_a/b/a_fold"/>
</dbReference>
<dbReference type="InterPro" id="IPR002547">
    <property type="entry name" value="tRNA-bd_dom"/>
</dbReference>
<dbReference type="InterPro" id="IPR002307">
    <property type="entry name" value="Tyr-tRNA-ligase"/>
</dbReference>
<dbReference type="InterPro" id="IPR051270">
    <property type="entry name" value="Tyrosine-tRNA_ligase_regulator"/>
</dbReference>
<dbReference type="NCBIfam" id="NF006330">
    <property type="entry name" value="PRK08560.1"/>
    <property type="match status" value="1"/>
</dbReference>
<dbReference type="NCBIfam" id="TIGR00234">
    <property type="entry name" value="tyrS"/>
    <property type="match status" value="1"/>
</dbReference>
<dbReference type="PANTHER" id="PTHR11586">
    <property type="entry name" value="TRNA-AMINOACYLATION COFACTOR ARC1 FAMILY MEMBER"/>
    <property type="match status" value="1"/>
</dbReference>
<dbReference type="PANTHER" id="PTHR11586:SF43">
    <property type="entry name" value="TYROSINE--TRNA LIGASE, CYTOPLASMIC"/>
    <property type="match status" value="1"/>
</dbReference>
<dbReference type="Pfam" id="PF00579">
    <property type="entry name" value="tRNA-synt_1b"/>
    <property type="match status" value="1"/>
</dbReference>
<dbReference type="Pfam" id="PF01588">
    <property type="entry name" value="tRNA_bind"/>
    <property type="match status" value="1"/>
</dbReference>
<dbReference type="PRINTS" id="PR01040">
    <property type="entry name" value="TRNASYNTHTYR"/>
</dbReference>
<dbReference type="SUPFAM" id="SSF50249">
    <property type="entry name" value="Nucleic acid-binding proteins"/>
    <property type="match status" value="1"/>
</dbReference>
<dbReference type="SUPFAM" id="SSF52374">
    <property type="entry name" value="Nucleotidylyl transferase"/>
    <property type="match status" value="1"/>
</dbReference>
<dbReference type="PROSITE" id="PS50886">
    <property type="entry name" value="TRBD"/>
    <property type="match status" value="1"/>
</dbReference>
<accession>Q7ZX51</accession>
<gene>
    <name type="primary">yars1</name>
    <name type="synonym">yars</name>
</gene>
<name>SYYC_XENLA</name>
<reference key="1">
    <citation type="submission" date="2003-01" db="EMBL/GenBank/DDBJ databases">
        <authorList>
            <consortium name="NIH - Xenopus Gene Collection (XGC) project"/>
        </authorList>
    </citation>
    <scope>NUCLEOTIDE SEQUENCE [LARGE SCALE MRNA]</scope>
    <source>
        <tissue>Embryo</tissue>
    </source>
</reference>
<protein>
    <recommendedName>
        <fullName>Tyrosine--tRNA ligase, cytoplasmic</fullName>
        <ecNumber evidence="1">6.1.1.1</ecNumber>
    </recommendedName>
    <alternativeName>
        <fullName>Tyrosyl-tRNA synthetase</fullName>
        <shortName>TyrRS</shortName>
    </alternativeName>
</protein>
<comment type="function">
    <text evidence="1">Catalyzes the attachment of tyrosine to tRNA(Tyr) in a two-step reaction: tyrosine is first activated by ATP to form Tyr-AMP and then transferred to the acceptor end of tRNA(Tyr).</text>
</comment>
<comment type="catalytic activity">
    <reaction evidence="1">
        <text>tRNA(Tyr) + L-tyrosine + ATP = L-tyrosyl-tRNA(Tyr) + AMP + diphosphate + H(+)</text>
        <dbReference type="Rhea" id="RHEA:10220"/>
        <dbReference type="Rhea" id="RHEA-COMP:9706"/>
        <dbReference type="Rhea" id="RHEA-COMP:9707"/>
        <dbReference type="ChEBI" id="CHEBI:15378"/>
        <dbReference type="ChEBI" id="CHEBI:30616"/>
        <dbReference type="ChEBI" id="CHEBI:33019"/>
        <dbReference type="ChEBI" id="CHEBI:58315"/>
        <dbReference type="ChEBI" id="CHEBI:78442"/>
        <dbReference type="ChEBI" id="CHEBI:78536"/>
        <dbReference type="ChEBI" id="CHEBI:456215"/>
        <dbReference type="EC" id="6.1.1.1"/>
    </reaction>
    <physiologicalReaction direction="left-to-right" evidence="1">
        <dbReference type="Rhea" id="RHEA:10221"/>
    </physiologicalReaction>
</comment>
<comment type="subunit">
    <text evidence="1">Homodimer.</text>
</comment>
<comment type="subcellular location">
    <subcellularLocation>
        <location evidence="1">Cytoplasm</location>
    </subcellularLocation>
    <subcellularLocation>
        <location evidence="1">Nucleus</location>
    </subcellularLocation>
</comment>
<comment type="domain">
    <text evidence="1">The nuclear localization signal, which mediates localization to the nucleus, is also important for interacting with tRNA(Tyr), suggesting that it is sterically blocked when tRNA(Tyr) is bound.</text>
</comment>
<comment type="similarity">
    <text evidence="4">Belongs to the class-I aminoacyl-tRNA synthetase family.</text>
</comment>